<dbReference type="EC" id="3.4.21.92" evidence="1"/>
<dbReference type="EMBL" id="CP000117">
    <property type="protein sequence ID" value="ABA23210.1"/>
    <property type="status" value="ALT_INIT"/>
    <property type="molecule type" value="Genomic_DNA"/>
</dbReference>
<dbReference type="SMR" id="Q3M726"/>
<dbReference type="STRING" id="240292.Ava_3604"/>
<dbReference type="MEROPS" id="S14.001"/>
<dbReference type="KEGG" id="ava:Ava_3604"/>
<dbReference type="eggNOG" id="COG0740">
    <property type="taxonomic scope" value="Bacteria"/>
</dbReference>
<dbReference type="HOGENOM" id="CLU_058707_3_2_3"/>
<dbReference type="Proteomes" id="UP000002533">
    <property type="component" value="Chromosome"/>
</dbReference>
<dbReference type="GO" id="GO:0005737">
    <property type="term" value="C:cytoplasm"/>
    <property type="evidence" value="ECO:0007669"/>
    <property type="project" value="UniProtKB-SubCell"/>
</dbReference>
<dbReference type="GO" id="GO:0009368">
    <property type="term" value="C:endopeptidase Clp complex"/>
    <property type="evidence" value="ECO:0007669"/>
    <property type="project" value="TreeGrafter"/>
</dbReference>
<dbReference type="GO" id="GO:0004176">
    <property type="term" value="F:ATP-dependent peptidase activity"/>
    <property type="evidence" value="ECO:0007669"/>
    <property type="project" value="InterPro"/>
</dbReference>
<dbReference type="GO" id="GO:0051117">
    <property type="term" value="F:ATPase binding"/>
    <property type="evidence" value="ECO:0007669"/>
    <property type="project" value="TreeGrafter"/>
</dbReference>
<dbReference type="GO" id="GO:0004252">
    <property type="term" value="F:serine-type endopeptidase activity"/>
    <property type="evidence" value="ECO:0007669"/>
    <property type="project" value="UniProtKB-UniRule"/>
</dbReference>
<dbReference type="GO" id="GO:0006515">
    <property type="term" value="P:protein quality control for misfolded or incompletely synthesized proteins"/>
    <property type="evidence" value="ECO:0007669"/>
    <property type="project" value="TreeGrafter"/>
</dbReference>
<dbReference type="CDD" id="cd07017">
    <property type="entry name" value="S14_ClpP_2"/>
    <property type="match status" value="1"/>
</dbReference>
<dbReference type="FunFam" id="3.90.226.10:FF:000001">
    <property type="entry name" value="ATP-dependent Clp protease proteolytic subunit"/>
    <property type="match status" value="1"/>
</dbReference>
<dbReference type="Gene3D" id="3.90.226.10">
    <property type="entry name" value="2-enoyl-CoA Hydratase, Chain A, domain 1"/>
    <property type="match status" value="1"/>
</dbReference>
<dbReference type="HAMAP" id="MF_00444">
    <property type="entry name" value="ClpP"/>
    <property type="match status" value="1"/>
</dbReference>
<dbReference type="InterPro" id="IPR001907">
    <property type="entry name" value="ClpP"/>
</dbReference>
<dbReference type="InterPro" id="IPR029045">
    <property type="entry name" value="ClpP/crotonase-like_dom_sf"/>
</dbReference>
<dbReference type="InterPro" id="IPR023562">
    <property type="entry name" value="ClpP/TepA"/>
</dbReference>
<dbReference type="InterPro" id="IPR033135">
    <property type="entry name" value="ClpP_His_AS"/>
</dbReference>
<dbReference type="InterPro" id="IPR018215">
    <property type="entry name" value="ClpP_Ser_AS"/>
</dbReference>
<dbReference type="NCBIfam" id="TIGR00493">
    <property type="entry name" value="clpP"/>
    <property type="match status" value="1"/>
</dbReference>
<dbReference type="NCBIfam" id="NF001368">
    <property type="entry name" value="PRK00277.1"/>
    <property type="match status" value="1"/>
</dbReference>
<dbReference type="NCBIfam" id="NF009205">
    <property type="entry name" value="PRK12553.1"/>
    <property type="match status" value="1"/>
</dbReference>
<dbReference type="PANTHER" id="PTHR10381">
    <property type="entry name" value="ATP-DEPENDENT CLP PROTEASE PROTEOLYTIC SUBUNIT"/>
    <property type="match status" value="1"/>
</dbReference>
<dbReference type="PANTHER" id="PTHR10381:SF70">
    <property type="entry name" value="ATP-DEPENDENT CLP PROTEASE PROTEOLYTIC SUBUNIT"/>
    <property type="match status" value="1"/>
</dbReference>
<dbReference type="Pfam" id="PF00574">
    <property type="entry name" value="CLP_protease"/>
    <property type="match status" value="1"/>
</dbReference>
<dbReference type="PRINTS" id="PR00127">
    <property type="entry name" value="CLPPROTEASEP"/>
</dbReference>
<dbReference type="SUPFAM" id="SSF52096">
    <property type="entry name" value="ClpP/crotonase"/>
    <property type="match status" value="1"/>
</dbReference>
<dbReference type="PROSITE" id="PS00382">
    <property type="entry name" value="CLP_PROTEASE_HIS"/>
    <property type="match status" value="1"/>
</dbReference>
<dbReference type="PROSITE" id="PS00381">
    <property type="entry name" value="CLP_PROTEASE_SER"/>
    <property type="match status" value="1"/>
</dbReference>
<reference key="1">
    <citation type="journal article" date="2014" name="Stand. Genomic Sci.">
        <title>Complete genome sequence of Anabaena variabilis ATCC 29413.</title>
        <authorList>
            <person name="Thiel T."/>
            <person name="Pratte B.S."/>
            <person name="Zhong J."/>
            <person name="Goodwin L."/>
            <person name="Copeland A."/>
            <person name="Lucas S."/>
            <person name="Han C."/>
            <person name="Pitluck S."/>
            <person name="Land M.L."/>
            <person name="Kyrpides N.C."/>
            <person name="Woyke T."/>
        </authorList>
    </citation>
    <scope>NUCLEOTIDE SEQUENCE [LARGE SCALE GENOMIC DNA]</scope>
    <source>
        <strain>ATCC 29413 / PCC 7937</strain>
    </source>
</reference>
<comment type="function">
    <text evidence="1">Cleaves peptides in various proteins in a process that requires ATP hydrolysis. Has a chymotrypsin-like activity. Plays a major role in the degradation of misfolded proteins.</text>
</comment>
<comment type="catalytic activity">
    <reaction evidence="1">
        <text>Hydrolysis of proteins to small peptides in the presence of ATP and magnesium. alpha-casein is the usual test substrate. In the absence of ATP, only oligopeptides shorter than five residues are hydrolyzed (such as succinyl-Leu-Tyr-|-NHMec, and Leu-Tyr-Leu-|-Tyr-Trp, in which cleavage of the -Tyr-|-Leu- and -Tyr-|-Trp bonds also occurs).</text>
        <dbReference type="EC" id="3.4.21.92"/>
    </reaction>
</comment>
<comment type="subunit">
    <text evidence="1">Fourteen ClpP subunits assemble into 2 heptameric rings which stack back to back to give a disk-like structure with a central cavity, resembling the structure of eukaryotic proteasomes.</text>
</comment>
<comment type="subcellular location">
    <subcellularLocation>
        <location evidence="1">Cytoplasm</location>
    </subcellularLocation>
</comment>
<comment type="similarity">
    <text evidence="1">Belongs to the peptidase S14 family.</text>
</comment>
<comment type="sequence caution" evidence="2">
    <conflict type="erroneous initiation">
        <sequence resource="EMBL-CDS" id="ABA23210"/>
    </conflict>
</comment>
<proteinExistence type="inferred from homology"/>
<name>CLPP3_TRIV2</name>
<protein>
    <recommendedName>
        <fullName evidence="1">ATP-dependent Clp protease proteolytic subunit 3</fullName>
        <ecNumber evidence="1">3.4.21.92</ecNumber>
    </recommendedName>
    <alternativeName>
        <fullName evidence="1">Endopeptidase Clp 3</fullName>
    </alternativeName>
</protein>
<keyword id="KW-0963">Cytoplasm</keyword>
<keyword id="KW-0378">Hydrolase</keyword>
<keyword id="KW-0645">Protease</keyword>
<keyword id="KW-0720">Serine protease</keyword>
<feature type="chain" id="PRO_0000236381" description="ATP-dependent Clp protease proteolytic subunit 3">
    <location>
        <begin position="1"/>
        <end position="214"/>
    </location>
</feature>
<feature type="active site" description="Nucleophile" evidence="1">
    <location>
        <position position="106"/>
    </location>
</feature>
<feature type="active site" evidence="1">
    <location>
        <position position="131"/>
    </location>
</feature>
<organism>
    <name type="scientific">Trichormus variabilis (strain ATCC 29413 / PCC 7937)</name>
    <name type="common">Anabaena variabilis</name>
    <dbReference type="NCBI Taxonomy" id="240292"/>
    <lineage>
        <taxon>Bacteria</taxon>
        <taxon>Bacillati</taxon>
        <taxon>Cyanobacteriota</taxon>
        <taxon>Cyanophyceae</taxon>
        <taxon>Nostocales</taxon>
        <taxon>Nostocaceae</taxon>
        <taxon>Trichormus</taxon>
    </lineage>
</organism>
<accession>Q3M726</accession>
<sequence length="214" mass="23411">MSSHLNGIGNIVPMVVEQSGMGERAFDIYSRLLRERIIFLGTPIDDAVANTIVAQLLFLDAEDSEKDIQLYINSPGGSVYAGMAIYDTIQQIRPDVVTICFGLAASMGAFLLTAGTKGKRMSLPDSRIMIHQPLGGAQGQAIDIEIQAREILYIKAQLNQLLANHTGQPLERIEADTDRDFFMSAEEAKNYGLIDQVISRQNLPTAGENVTIVK</sequence>
<gene>
    <name evidence="1" type="primary">clpP3</name>
    <name type="ordered locus">Ava_3604</name>
</gene>
<evidence type="ECO:0000255" key="1">
    <source>
        <dbReference type="HAMAP-Rule" id="MF_00444"/>
    </source>
</evidence>
<evidence type="ECO:0000305" key="2"/>